<gene>
    <name evidence="1" type="primary">rpsG</name>
    <name evidence="1" type="synonym">rps7</name>
    <name type="ordered locus">UU524</name>
</gene>
<feature type="chain" id="PRO_0000124376" description="Small ribosomal subunit protein uS7">
    <location>
        <begin position="1"/>
        <end position="155"/>
    </location>
</feature>
<keyword id="KW-1185">Reference proteome</keyword>
<keyword id="KW-0687">Ribonucleoprotein</keyword>
<keyword id="KW-0689">Ribosomal protein</keyword>
<keyword id="KW-0694">RNA-binding</keyword>
<keyword id="KW-0699">rRNA-binding</keyword>
<keyword id="KW-0820">tRNA-binding</keyword>
<dbReference type="EMBL" id="AF222894">
    <property type="protein sequence ID" value="AAF30937.1"/>
    <property type="molecule type" value="Genomic_DNA"/>
</dbReference>
<dbReference type="RefSeq" id="WP_004026103.1">
    <property type="nucleotide sequence ID" value="NC_002162.1"/>
</dbReference>
<dbReference type="SMR" id="Q9PPW6"/>
<dbReference type="STRING" id="273119.UU524"/>
<dbReference type="EnsemblBacteria" id="AAF30937">
    <property type="protein sequence ID" value="AAF30937"/>
    <property type="gene ID" value="UU524"/>
</dbReference>
<dbReference type="GeneID" id="93849073"/>
<dbReference type="KEGG" id="uur:UU524"/>
<dbReference type="eggNOG" id="COG0049">
    <property type="taxonomic scope" value="Bacteria"/>
</dbReference>
<dbReference type="HOGENOM" id="CLU_072226_1_1_14"/>
<dbReference type="OrthoDB" id="9807653at2"/>
<dbReference type="Proteomes" id="UP000000423">
    <property type="component" value="Chromosome"/>
</dbReference>
<dbReference type="GO" id="GO:0015935">
    <property type="term" value="C:small ribosomal subunit"/>
    <property type="evidence" value="ECO:0007669"/>
    <property type="project" value="InterPro"/>
</dbReference>
<dbReference type="GO" id="GO:0019843">
    <property type="term" value="F:rRNA binding"/>
    <property type="evidence" value="ECO:0007669"/>
    <property type="project" value="UniProtKB-UniRule"/>
</dbReference>
<dbReference type="GO" id="GO:0003735">
    <property type="term" value="F:structural constituent of ribosome"/>
    <property type="evidence" value="ECO:0007669"/>
    <property type="project" value="InterPro"/>
</dbReference>
<dbReference type="GO" id="GO:0000049">
    <property type="term" value="F:tRNA binding"/>
    <property type="evidence" value="ECO:0007669"/>
    <property type="project" value="UniProtKB-UniRule"/>
</dbReference>
<dbReference type="GO" id="GO:0006412">
    <property type="term" value="P:translation"/>
    <property type="evidence" value="ECO:0007669"/>
    <property type="project" value="UniProtKB-UniRule"/>
</dbReference>
<dbReference type="CDD" id="cd14869">
    <property type="entry name" value="uS7_Bacteria"/>
    <property type="match status" value="1"/>
</dbReference>
<dbReference type="FunFam" id="1.10.455.10:FF:000001">
    <property type="entry name" value="30S ribosomal protein S7"/>
    <property type="match status" value="1"/>
</dbReference>
<dbReference type="Gene3D" id="1.10.455.10">
    <property type="entry name" value="Ribosomal protein S7 domain"/>
    <property type="match status" value="1"/>
</dbReference>
<dbReference type="HAMAP" id="MF_00480_B">
    <property type="entry name" value="Ribosomal_uS7_B"/>
    <property type="match status" value="1"/>
</dbReference>
<dbReference type="InterPro" id="IPR000235">
    <property type="entry name" value="Ribosomal_uS7"/>
</dbReference>
<dbReference type="InterPro" id="IPR005717">
    <property type="entry name" value="Ribosomal_uS7_bac/org-type"/>
</dbReference>
<dbReference type="InterPro" id="IPR020606">
    <property type="entry name" value="Ribosomal_uS7_CS"/>
</dbReference>
<dbReference type="InterPro" id="IPR023798">
    <property type="entry name" value="Ribosomal_uS7_dom"/>
</dbReference>
<dbReference type="InterPro" id="IPR036823">
    <property type="entry name" value="Ribosomal_uS7_dom_sf"/>
</dbReference>
<dbReference type="NCBIfam" id="TIGR01029">
    <property type="entry name" value="rpsG_bact"/>
    <property type="match status" value="1"/>
</dbReference>
<dbReference type="PANTHER" id="PTHR11205">
    <property type="entry name" value="RIBOSOMAL PROTEIN S7"/>
    <property type="match status" value="1"/>
</dbReference>
<dbReference type="Pfam" id="PF00177">
    <property type="entry name" value="Ribosomal_S7"/>
    <property type="match status" value="1"/>
</dbReference>
<dbReference type="PIRSF" id="PIRSF002122">
    <property type="entry name" value="RPS7p_RPS7a_RPS5e_RPS7o"/>
    <property type="match status" value="1"/>
</dbReference>
<dbReference type="SUPFAM" id="SSF47973">
    <property type="entry name" value="Ribosomal protein S7"/>
    <property type="match status" value="1"/>
</dbReference>
<dbReference type="PROSITE" id="PS00052">
    <property type="entry name" value="RIBOSOMAL_S7"/>
    <property type="match status" value="1"/>
</dbReference>
<protein>
    <recommendedName>
        <fullName evidence="1">Small ribosomal subunit protein uS7</fullName>
    </recommendedName>
    <alternativeName>
        <fullName evidence="2">30S ribosomal protein S7</fullName>
    </alternativeName>
</protein>
<sequence length="155" mass="17745">MRKLKPQKRQVLADPVYNSRLVTKLINAIMYDGKKGLAQSIIYSAFEIVEQKTGKPALEVFNKAIDNVMPIIELKVRRVGGSNFQVPTEVTPERRQTLGLRWITLYARLRHEHTMIEKLAHEIIDASNNVGAAIKKKEDTHKMAEANKAFAHLRW</sequence>
<organism>
    <name type="scientific">Ureaplasma parvum serovar 3 (strain ATCC 700970)</name>
    <dbReference type="NCBI Taxonomy" id="273119"/>
    <lineage>
        <taxon>Bacteria</taxon>
        <taxon>Bacillati</taxon>
        <taxon>Mycoplasmatota</taxon>
        <taxon>Mycoplasmoidales</taxon>
        <taxon>Mycoplasmoidaceae</taxon>
        <taxon>Ureaplasma</taxon>
    </lineage>
</organism>
<evidence type="ECO:0000255" key="1">
    <source>
        <dbReference type="HAMAP-Rule" id="MF_00480"/>
    </source>
</evidence>
<evidence type="ECO:0000305" key="2"/>
<name>RS7_UREPA</name>
<accession>Q9PPW6</accession>
<proteinExistence type="inferred from homology"/>
<reference key="1">
    <citation type="journal article" date="2000" name="Nature">
        <title>The complete sequence of the mucosal pathogen Ureaplasma urealyticum.</title>
        <authorList>
            <person name="Glass J.I."/>
            <person name="Lefkowitz E.J."/>
            <person name="Glass J.S."/>
            <person name="Heiner C.R."/>
            <person name="Chen E.Y."/>
            <person name="Cassell G.H."/>
        </authorList>
    </citation>
    <scope>NUCLEOTIDE SEQUENCE [LARGE SCALE GENOMIC DNA]</scope>
    <source>
        <strain>ATCC 700970</strain>
    </source>
</reference>
<comment type="function">
    <text evidence="1">One of the primary rRNA binding proteins, it binds directly to 16S rRNA where it nucleates assembly of the head domain of the 30S subunit. Is located at the subunit interface close to the decoding center, probably blocks exit of the E-site tRNA.</text>
</comment>
<comment type="subunit">
    <text evidence="1">Part of the 30S ribosomal subunit. Contacts proteins S9 and S11.</text>
</comment>
<comment type="similarity">
    <text evidence="1">Belongs to the universal ribosomal protein uS7 family.</text>
</comment>